<name>CYO2_VIOOD</name>
<accession>P58434</accession>
<reference key="1">
    <citation type="journal article" date="1999" name="J. Mol. Biol.">
        <title>Plant cyclotides: a unique family of cyclic and knotted proteins that defines the cyclic cystine knot structural motif.</title>
        <authorList>
            <person name="Craik D.J."/>
            <person name="Daly N.L."/>
            <person name="Bond T."/>
            <person name="Waine C."/>
        </authorList>
    </citation>
    <scope>PROTEIN SEQUENCE</scope>
</reference>
<reference key="2">
    <citation type="journal article" date="2006" name="Biochem. J.">
        <title>A novel suite of cyclotides from Viola odorata: sequence variation and the implications for structure, function and stability.</title>
        <authorList>
            <person name="Ireland D.C."/>
            <person name="Colgrave M.L."/>
            <person name="Craik D.J."/>
        </authorList>
    </citation>
    <scope>PROTEIN SEQUENCE</scope>
    <scope>FUNCTION</scope>
    <scope>MASS SPECTROMETRY</scope>
</reference>
<reference key="3">
    <citation type="journal article" date="2002" name="Mol. Cancer Ther.">
        <title>Cyclotides: a novel type of cytotoxic agents.</title>
        <authorList>
            <person name="Lindholm P."/>
            <person name="Goransson U."/>
            <person name="Johansson S."/>
            <person name="Claeson P."/>
            <person name="Gullbo J."/>
            <person name="Larsson R."/>
            <person name="Bohlin L."/>
            <person name="Backlund A."/>
        </authorList>
    </citation>
    <scope>FUNCTION</scope>
</reference>
<reference key="4">
    <citation type="journal article" date="2017" name="J. Nat. Prod.">
        <title>Cyclotides from the Indian Medicinal Plant Viola odorata (Banafsha): Identification and Characterization.</title>
        <authorList>
            <person name="Narayani M."/>
            <person name="Chadha A."/>
            <person name="Srivastava S."/>
        </authorList>
    </citation>
    <scope>TISSUE SPECIFICITY</scope>
    <scope>IDENTIFICATION BY MASS SPECTROMETRY</scope>
</reference>
<evidence type="ECO:0000255" key="1">
    <source>
        <dbReference type="PROSITE-ProRule" id="PRU00395"/>
    </source>
</evidence>
<evidence type="ECO:0000269" key="2">
    <source>
    </source>
</evidence>
<evidence type="ECO:0000269" key="3">
    <source>
    </source>
</evidence>
<evidence type="ECO:0000269" key="4">
    <source>
    </source>
</evidence>
<evidence type="ECO:0000305" key="5"/>
<evidence type="ECO:0007829" key="6">
    <source>
        <dbReference type="PDB" id="7RMR"/>
    </source>
</evidence>
<comment type="function">
    <text evidence="1 2 3">Probably participates in a plant defense mechanism. Has strong cytotoxic activity against a variety of drug-resistant and drug-sensitive human tumor cell lines, and against primary chronic lymphocytic leukemia and ovarian carcinoma cells. Has weaker cytotoxic activity against normal lymphocytes. Has hemolytic activity.</text>
</comment>
<comment type="tissue specificity">
    <text evidence="4">Expressed in leaves, petals, petioles, roots and runners (at protein level).</text>
</comment>
<comment type="domain">
    <text>The presence of a 'disulfide through disulfide knot' structurally defines this protein as a knottin.</text>
</comment>
<comment type="PTM">
    <text>This is a cyclic peptide.</text>
</comment>
<comment type="mass spectrometry"/>
<comment type="similarity">
    <text evidence="1">Belongs to the cyclotide family. Bracelet subfamily.</text>
</comment>
<comment type="caution">
    <text evidence="5">This peptide is cyclic. The start position was chosen by similarity to OAK1 (kalata-B1) for which the DNA sequence is known.</text>
</comment>
<keyword id="KW-0002">3D-structure</keyword>
<keyword id="KW-0204">Cytolysis</keyword>
<keyword id="KW-0903">Direct protein sequencing</keyword>
<keyword id="KW-1015">Disulfide bond</keyword>
<keyword id="KW-0354">Hemolysis</keyword>
<keyword id="KW-0960">Knottin</keyword>
<keyword id="KW-0611">Plant defense</keyword>
<protein>
    <recommendedName>
        <fullName>Cycloviolacin-O2</fullName>
    </recommendedName>
</protein>
<dbReference type="PDB" id="2KCG">
    <property type="method" value="NMR"/>
    <property type="chains" value="A=1-30"/>
</dbReference>
<dbReference type="PDB" id="2KNM">
    <property type="method" value="NMR"/>
    <property type="chains" value="A=1-30"/>
</dbReference>
<dbReference type="PDB" id="2KNN">
    <property type="method" value="NMR"/>
    <property type="chains" value="A=1-30"/>
</dbReference>
<dbReference type="PDB" id="7RMQ">
    <property type="method" value="X-ray"/>
    <property type="resolution" value="1.17 A"/>
    <property type="chains" value="A/B=2-30"/>
</dbReference>
<dbReference type="PDB" id="7RMR">
    <property type="method" value="X-ray"/>
    <property type="resolution" value="1.04 A"/>
    <property type="chains" value="A/B=2-30"/>
</dbReference>
<dbReference type="PDB" id="7RMS">
    <property type="method" value="X-ray"/>
    <property type="resolution" value="1.10 A"/>
    <property type="chains" value="A/B=2-30"/>
</dbReference>
<dbReference type="PDBsum" id="2KCG"/>
<dbReference type="PDBsum" id="2KNM"/>
<dbReference type="PDBsum" id="2KNN"/>
<dbReference type="PDBsum" id="7RMQ"/>
<dbReference type="PDBsum" id="7RMR"/>
<dbReference type="PDBsum" id="7RMS"/>
<dbReference type="BMRB" id="P58434"/>
<dbReference type="SMR" id="P58434"/>
<dbReference type="EvolutionaryTrace" id="P58434"/>
<dbReference type="GO" id="GO:0006952">
    <property type="term" value="P:defense response"/>
    <property type="evidence" value="ECO:0000314"/>
    <property type="project" value="UniProtKB"/>
</dbReference>
<dbReference type="GO" id="GO:0031640">
    <property type="term" value="P:killing of cells of another organism"/>
    <property type="evidence" value="ECO:0007669"/>
    <property type="project" value="UniProtKB-KW"/>
</dbReference>
<dbReference type="InterPro" id="IPR005535">
    <property type="entry name" value="Cyclotide"/>
</dbReference>
<dbReference type="InterPro" id="IPR012323">
    <property type="entry name" value="Cyclotide_bracelet_CS"/>
</dbReference>
<dbReference type="InterPro" id="IPR036146">
    <property type="entry name" value="Cyclotide_sf"/>
</dbReference>
<dbReference type="Pfam" id="PF03784">
    <property type="entry name" value="Cyclotide"/>
    <property type="match status" value="1"/>
</dbReference>
<dbReference type="PIRSF" id="PIRSF037891">
    <property type="entry name" value="Cycloviolacin"/>
    <property type="match status" value="1"/>
</dbReference>
<dbReference type="SUPFAM" id="SSF57038">
    <property type="entry name" value="Cyclotides"/>
    <property type="match status" value="1"/>
</dbReference>
<dbReference type="PROSITE" id="PS51052">
    <property type="entry name" value="CYCLOTIDE"/>
    <property type="match status" value="1"/>
</dbReference>
<dbReference type="PROSITE" id="PS60008">
    <property type="entry name" value="CYCLOTIDE_BRACELET"/>
    <property type="match status" value="1"/>
</dbReference>
<sequence>GIPCGESCVWIPCISSAIGCSCKSKVCYRN</sequence>
<proteinExistence type="evidence at protein level"/>
<feature type="peptide" id="PRO_0000043610" description="Cycloviolacin-O2">
    <location>
        <begin position="1"/>
        <end position="30"/>
    </location>
</feature>
<feature type="disulfide bond">
    <location>
        <begin position="4"/>
        <end position="20"/>
    </location>
</feature>
<feature type="disulfide bond">
    <location>
        <begin position="8"/>
        <end position="22"/>
    </location>
</feature>
<feature type="disulfide bond">
    <location>
        <begin position="13"/>
        <end position="27"/>
    </location>
</feature>
<feature type="cross-link" description="Cyclopeptide (Gly-Asn)">
    <location>
        <begin position="1"/>
        <end position="30"/>
    </location>
</feature>
<feature type="strand" evidence="6">
    <location>
        <begin position="3"/>
        <end position="7"/>
    </location>
</feature>
<feature type="strand" evidence="6">
    <location>
        <begin position="9"/>
        <end position="11"/>
    </location>
</feature>
<feature type="helix" evidence="6">
    <location>
        <begin position="14"/>
        <end position="18"/>
    </location>
</feature>
<feature type="strand" evidence="6">
    <location>
        <begin position="21"/>
        <end position="23"/>
    </location>
</feature>
<feature type="strand" evidence="6">
    <location>
        <begin position="26"/>
        <end position="29"/>
    </location>
</feature>
<organism>
    <name type="scientific">Viola odorata</name>
    <name type="common">Sweet violet</name>
    <dbReference type="NCBI Taxonomy" id="97441"/>
    <lineage>
        <taxon>Eukaryota</taxon>
        <taxon>Viridiplantae</taxon>
        <taxon>Streptophyta</taxon>
        <taxon>Embryophyta</taxon>
        <taxon>Tracheophyta</taxon>
        <taxon>Spermatophyta</taxon>
        <taxon>Magnoliopsida</taxon>
        <taxon>eudicotyledons</taxon>
        <taxon>Gunneridae</taxon>
        <taxon>Pentapetalae</taxon>
        <taxon>rosids</taxon>
        <taxon>fabids</taxon>
        <taxon>Malpighiales</taxon>
        <taxon>Violaceae</taxon>
        <taxon>Viola</taxon>
        <taxon>Viola subgen. Viola</taxon>
        <taxon>Viola sect. Viola</taxon>
        <taxon>Viola subsect. Viola</taxon>
    </lineage>
</organism>